<protein>
    <recommendedName>
        <fullName evidence="1">4-hydroxythreonine-4-phosphate dehydrogenase</fullName>
        <ecNumber evidence="1">1.1.1.262</ecNumber>
    </recommendedName>
    <alternativeName>
        <fullName evidence="1">4-(phosphohydroxy)-L-threonine dehydrogenase</fullName>
    </alternativeName>
</protein>
<comment type="function">
    <text evidence="1">Catalyzes the NAD(P)-dependent oxidation of 4-(phosphooxy)-L-threonine (HTP) into 2-amino-3-oxo-4-(phosphooxy)butyric acid which spontaneously decarboxylates to form 3-amino-2-oxopropyl phosphate (AHAP).</text>
</comment>
<comment type="catalytic activity">
    <reaction evidence="1">
        <text>4-(phosphooxy)-L-threonine + NAD(+) = 3-amino-2-oxopropyl phosphate + CO2 + NADH</text>
        <dbReference type="Rhea" id="RHEA:32275"/>
        <dbReference type="ChEBI" id="CHEBI:16526"/>
        <dbReference type="ChEBI" id="CHEBI:57279"/>
        <dbReference type="ChEBI" id="CHEBI:57540"/>
        <dbReference type="ChEBI" id="CHEBI:57945"/>
        <dbReference type="ChEBI" id="CHEBI:58452"/>
        <dbReference type="EC" id="1.1.1.262"/>
    </reaction>
</comment>
<comment type="cofactor">
    <cofactor evidence="1">
        <name>Zn(2+)</name>
        <dbReference type="ChEBI" id="CHEBI:29105"/>
    </cofactor>
    <cofactor evidence="1">
        <name>Mg(2+)</name>
        <dbReference type="ChEBI" id="CHEBI:18420"/>
    </cofactor>
    <cofactor evidence="1">
        <name>Co(2+)</name>
        <dbReference type="ChEBI" id="CHEBI:48828"/>
    </cofactor>
    <text evidence="1">Binds 1 divalent metal cation per subunit. Can use ions such as Zn(2+), Mg(2+) or Co(2+).</text>
</comment>
<comment type="pathway">
    <text evidence="1">Cofactor biosynthesis; pyridoxine 5'-phosphate biosynthesis; pyridoxine 5'-phosphate from D-erythrose 4-phosphate: step 4/5.</text>
</comment>
<comment type="subunit">
    <text evidence="1">Homodimer.</text>
</comment>
<comment type="subcellular location">
    <subcellularLocation>
        <location evidence="1">Cytoplasm</location>
    </subcellularLocation>
</comment>
<comment type="miscellaneous">
    <text evidence="1">The active site is located at the dimer interface.</text>
</comment>
<comment type="similarity">
    <text evidence="1">Belongs to the PdxA family.</text>
</comment>
<reference key="1">
    <citation type="submission" date="2007-10" db="EMBL/GenBank/DDBJ databases">
        <title>Complete sequence of Desulfococcus oleovorans Hxd3.</title>
        <authorList>
            <consortium name="US DOE Joint Genome Institute"/>
            <person name="Copeland A."/>
            <person name="Lucas S."/>
            <person name="Lapidus A."/>
            <person name="Barry K."/>
            <person name="Glavina del Rio T."/>
            <person name="Dalin E."/>
            <person name="Tice H."/>
            <person name="Pitluck S."/>
            <person name="Kiss H."/>
            <person name="Brettin T."/>
            <person name="Bruce D."/>
            <person name="Detter J.C."/>
            <person name="Han C."/>
            <person name="Schmutz J."/>
            <person name="Larimer F."/>
            <person name="Land M."/>
            <person name="Hauser L."/>
            <person name="Kyrpides N."/>
            <person name="Kim E."/>
            <person name="Wawrik B."/>
            <person name="Richardson P."/>
        </authorList>
    </citation>
    <scope>NUCLEOTIDE SEQUENCE [LARGE SCALE GENOMIC DNA]</scope>
    <source>
        <strain>DSM 6200 / JCM 39069 / Hxd3</strain>
    </source>
</reference>
<dbReference type="EC" id="1.1.1.262" evidence="1"/>
<dbReference type="EMBL" id="CP000859">
    <property type="protein sequence ID" value="ABW66443.1"/>
    <property type="molecule type" value="Genomic_DNA"/>
</dbReference>
<dbReference type="RefSeq" id="WP_012174062.1">
    <property type="nucleotide sequence ID" value="NC_009943.1"/>
</dbReference>
<dbReference type="SMR" id="A8ZUN0"/>
<dbReference type="STRING" id="96561.Dole_0633"/>
<dbReference type="KEGG" id="dol:Dole_0633"/>
<dbReference type="eggNOG" id="COG1995">
    <property type="taxonomic scope" value="Bacteria"/>
</dbReference>
<dbReference type="HOGENOM" id="CLU_040168_0_0_7"/>
<dbReference type="OrthoDB" id="9801783at2"/>
<dbReference type="UniPathway" id="UPA00244">
    <property type="reaction ID" value="UER00312"/>
</dbReference>
<dbReference type="Proteomes" id="UP000008561">
    <property type="component" value="Chromosome"/>
</dbReference>
<dbReference type="GO" id="GO:0005737">
    <property type="term" value="C:cytoplasm"/>
    <property type="evidence" value="ECO:0007669"/>
    <property type="project" value="UniProtKB-SubCell"/>
</dbReference>
<dbReference type="GO" id="GO:0050570">
    <property type="term" value="F:4-hydroxythreonine-4-phosphate dehydrogenase activity"/>
    <property type="evidence" value="ECO:0007669"/>
    <property type="project" value="UniProtKB-UniRule"/>
</dbReference>
<dbReference type="GO" id="GO:0046872">
    <property type="term" value="F:metal ion binding"/>
    <property type="evidence" value="ECO:0007669"/>
    <property type="project" value="UniProtKB-UniRule"/>
</dbReference>
<dbReference type="GO" id="GO:0051287">
    <property type="term" value="F:NAD binding"/>
    <property type="evidence" value="ECO:0007669"/>
    <property type="project" value="InterPro"/>
</dbReference>
<dbReference type="GO" id="GO:0042823">
    <property type="term" value="P:pyridoxal phosphate biosynthetic process"/>
    <property type="evidence" value="ECO:0007669"/>
    <property type="project" value="UniProtKB-UniRule"/>
</dbReference>
<dbReference type="GO" id="GO:0008615">
    <property type="term" value="P:pyridoxine biosynthetic process"/>
    <property type="evidence" value="ECO:0007669"/>
    <property type="project" value="UniProtKB-UniRule"/>
</dbReference>
<dbReference type="Gene3D" id="3.40.718.10">
    <property type="entry name" value="Isopropylmalate Dehydrogenase"/>
    <property type="match status" value="1"/>
</dbReference>
<dbReference type="HAMAP" id="MF_00536">
    <property type="entry name" value="PdxA"/>
    <property type="match status" value="1"/>
</dbReference>
<dbReference type="InterPro" id="IPR037510">
    <property type="entry name" value="PdxA"/>
</dbReference>
<dbReference type="InterPro" id="IPR005255">
    <property type="entry name" value="PdxA_fam"/>
</dbReference>
<dbReference type="NCBIfam" id="TIGR00557">
    <property type="entry name" value="pdxA"/>
    <property type="match status" value="1"/>
</dbReference>
<dbReference type="PANTHER" id="PTHR30004">
    <property type="entry name" value="4-HYDROXYTHREONINE-4-PHOSPHATE DEHYDROGENASE"/>
    <property type="match status" value="1"/>
</dbReference>
<dbReference type="PANTHER" id="PTHR30004:SF6">
    <property type="entry name" value="D-THREONATE 4-PHOSPHATE DEHYDROGENASE"/>
    <property type="match status" value="1"/>
</dbReference>
<dbReference type="Pfam" id="PF04166">
    <property type="entry name" value="PdxA"/>
    <property type="match status" value="1"/>
</dbReference>
<dbReference type="SUPFAM" id="SSF53659">
    <property type="entry name" value="Isocitrate/Isopropylmalate dehydrogenase-like"/>
    <property type="match status" value="1"/>
</dbReference>
<organism>
    <name type="scientific">Desulfosudis oleivorans (strain DSM 6200 / JCM 39069 / Hxd3)</name>
    <name type="common">Desulfococcus oleovorans</name>
    <dbReference type="NCBI Taxonomy" id="96561"/>
    <lineage>
        <taxon>Bacteria</taxon>
        <taxon>Pseudomonadati</taxon>
        <taxon>Thermodesulfobacteriota</taxon>
        <taxon>Desulfobacteria</taxon>
        <taxon>Desulfobacterales</taxon>
        <taxon>Desulfosudaceae</taxon>
        <taxon>Desulfosudis</taxon>
    </lineage>
</organism>
<name>PDXA_DESOH</name>
<gene>
    <name evidence="1" type="primary">pdxA</name>
    <name type="ordered locus">Dole_0633</name>
</gene>
<sequence length="338" mass="35285">MNPRPLIGITMGDPVGIGPEIILTALAGTSVYEKCRPLVIGDPGVLGQAMAVAGYAPVIHMTDTPETGVYRPGTISMFSPAPPLSPVTWGEPTPETGGAMEAWITTAVDMAMAGAISAMVTCPINKEALKMAGSAFAGHTEMLAMRTGTNRYAMMLAGNRLRVVLVTIHTALQNVPGLLSVDAIADTILLTVESLKQRFGMNAPRVAVAGLNPHAGEGGLFGDEEARLITPAIEAARRKTEAAITGPWPPDTVFVKAAAGDFDAVVCMYHDQGLIPFKLLHFEDGVNTTLGLPIIRTSVDHGTAYDIAGTGRADCRSLTAAIDMAIDQAACLGKRPAA</sequence>
<feature type="chain" id="PRO_1000211913" description="4-hydroxythreonine-4-phosphate dehydrogenase">
    <location>
        <begin position="1"/>
        <end position="338"/>
    </location>
</feature>
<feature type="binding site" evidence="1">
    <location>
        <position position="139"/>
    </location>
    <ligand>
        <name>substrate</name>
    </ligand>
</feature>
<feature type="binding site" evidence="1">
    <location>
        <position position="140"/>
    </location>
    <ligand>
        <name>substrate</name>
    </ligand>
</feature>
<feature type="binding site" evidence="1">
    <location>
        <position position="169"/>
    </location>
    <ligand>
        <name>a divalent metal cation</name>
        <dbReference type="ChEBI" id="CHEBI:60240"/>
        <note>ligand shared between dimeric partners</note>
    </ligand>
</feature>
<feature type="binding site" evidence="1">
    <location>
        <position position="214"/>
    </location>
    <ligand>
        <name>a divalent metal cation</name>
        <dbReference type="ChEBI" id="CHEBI:60240"/>
        <note>ligand shared between dimeric partners</note>
    </ligand>
</feature>
<feature type="binding site" evidence="1">
    <location>
        <position position="270"/>
    </location>
    <ligand>
        <name>a divalent metal cation</name>
        <dbReference type="ChEBI" id="CHEBI:60240"/>
        <note>ligand shared between dimeric partners</note>
    </ligand>
</feature>
<feature type="binding site" evidence="1">
    <location>
        <position position="278"/>
    </location>
    <ligand>
        <name>substrate</name>
    </ligand>
</feature>
<feature type="binding site" evidence="1">
    <location>
        <position position="287"/>
    </location>
    <ligand>
        <name>substrate</name>
    </ligand>
</feature>
<feature type="binding site" evidence="1">
    <location>
        <position position="296"/>
    </location>
    <ligand>
        <name>substrate</name>
    </ligand>
</feature>
<evidence type="ECO:0000255" key="1">
    <source>
        <dbReference type="HAMAP-Rule" id="MF_00536"/>
    </source>
</evidence>
<proteinExistence type="inferred from homology"/>
<keyword id="KW-0170">Cobalt</keyword>
<keyword id="KW-0963">Cytoplasm</keyword>
<keyword id="KW-0460">Magnesium</keyword>
<keyword id="KW-0479">Metal-binding</keyword>
<keyword id="KW-0520">NAD</keyword>
<keyword id="KW-0521">NADP</keyword>
<keyword id="KW-0560">Oxidoreductase</keyword>
<keyword id="KW-0664">Pyridoxine biosynthesis</keyword>
<keyword id="KW-1185">Reference proteome</keyword>
<keyword id="KW-0862">Zinc</keyword>
<accession>A8ZUN0</accession>